<proteinExistence type="evidence at protein level"/>
<name>HNF1A_RAT</name>
<keyword id="KW-0002">3D-structure</keyword>
<keyword id="KW-0010">Activator</keyword>
<keyword id="KW-0238">DNA-binding</keyword>
<keyword id="KW-0371">Homeobox</keyword>
<keyword id="KW-1017">Isopeptide bond</keyword>
<keyword id="KW-0539">Nucleus</keyword>
<keyword id="KW-0597">Phosphoprotein</keyword>
<keyword id="KW-1185">Reference proteome</keyword>
<keyword id="KW-0804">Transcription</keyword>
<keyword id="KW-0805">Transcription regulation</keyword>
<keyword id="KW-0832">Ubl conjugation</keyword>
<organism>
    <name type="scientific">Rattus norvegicus</name>
    <name type="common">Rat</name>
    <dbReference type="NCBI Taxonomy" id="10116"/>
    <lineage>
        <taxon>Eukaryota</taxon>
        <taxon>Metazoa</taxon>
        <taxon>Chordata</taxon>
        <taxon>Craniata</taxon>
        <taxon>Vertebrata</taxon>
        <taxon>Euteleostomi</taxon>
        <taxon>Mammalia</taxon>
        <taxon>Eutheria</taxon>
        <taxon>Euarchontoglires</taxon>
        <taxon>Glires</taxon>
        <taxon>Rodentia</taxon>
        <taxon>Myomorpha</taxon>
        <taxon>Muroidea</taxon>
        <taxon>Muridae</taxon>
        <taxon>Murinae</taxon>
        <taxon>Rattus</taxon>
    </lineage>
</organism>
<gene>
    <name type="primary">Hnf1a</name>
    <name type="synonym">Hnf-1</name>
    <name type="synonym">Hnf-1a</name>
    <name type="synonym">Tcf1</name>
</gene>
<dbReference type="EMBL" id="J03170">
    <property type="protein sequence ID" value="AAA41524.1"/>
    <property type="molecule type" value="mRNA"/>
</dbReference>
<dbReference type="EMBL" id="X54423">
    <property type="protein sequence ID" value="CAA38295.1"/>
    <property type="molecule type" value="mRNA"/>
</dbReference>
<dbReference type="EMBL" id="X67649">
    <property type="protein sequence ID" value="CAA47891.1"/>
    <property type="molecule type" value="Genomic_DNA"/>
</dbReference>
<dbReference type="EMBL" id="X53297">
    <property type="protein sequence ID" value="CAA37387.1"/>
    <property type="status" value="ALT_INIT"/>
    <property type="molecule type" value="mRNA"/>
</dbReference>
<dbReference type="PIR" id="A33333">
    <property type="entry name" value="A33333"/>
</dbReference>
<dbReference type="PIR" id="S25485">
    <property type="entry name" value="S25485"/>
</dbReference>
<dbReference type="RefSeq" id="NP_036801.1">
    <property type="nucleotide sequence ID" value="NM_012669.1"/>
</dbReference>
<dbReference type="PDB" id="1LFB">
    <property type="method" value="X-ray"/>
    <property type="resolution" value="2.80 A"/>
    <property type="chains" value="A=195-286"/>
</dbReference>
<dbReference type="PDB" id="2LFB">
    <property type="method" value="NMR"/>
    <property type="chains" value="A=195-286"/>
</dbReference>
<dbReference type="PDBsum" id="1LFB"/>
<dbReference type="PDBsum" id="2LFB"/>
<dbReference type="BMRB" id="P15257"/>
<dbReference type="SMR" id="P15257"/>
<dbReference type="BioGRID" id="246939">
    <property type="interactions" value="1"/>
</dbReference>
<dbReference type="FunCoup" id="P15257">
    <property type="interactions" value="103"/>
</dbReference>
<dbReference type="STRING" id="10116.ENSRNOP00000001565"/>
<dbReference type="iPTMnet" id="P15257"/>
<dbReference type="PhosphoSitePlus" id="P15257"/>
<dbReference type="PaxDb" id="10116-ENSRNOP00000001565"/>
<dbReference type="Ensembl" id="ENSRNOT00000001565.4">
    <property type="protein sequence ID" value="ENSRNOP00000001565.2"/>
    <property type="gene ID" value="ENSRNOG00000001183.4"/>
</dbReference>
<dbReference type="GeneID" id="24817"/>
<dbReference type="KEGG" id="rno:24817"/>
<dbReference type="AGR" id="RGD:3828"/>
<dbReference type="CTD" id="6927"/>
<dbReference type="RGD" id="3828">
    <property type="gene designation" value="Hnf1a"/>
</dbReference>
<dbReference type="eggNOG" id="ENOG502QRPW">
    <property type="taxonomic scope" value="Eukaryota"/>
</dbReference>
<dbReference type="GeneTree" id="ENSGT00940000153818"/>
<dbReference type="HOGENOM" id="CLU_035503_0_0_1"/>
<dbReference type="InParanoid" id="P15257"/>
<dbReference type="OMA" id="EPCPDIP"/>
<dbReference type="OrthoDB" id="10069265at2759"/>
<dbReference type="PhylomeDB" id="P15257"/>
<dbReference type="TreeFam" id="TF320327"/>
<dbReference type="EvolutionaryTrace" id="P15257"/>
<dbReference type="PRO" id="PR:P15257"/>
<dbReference type="Proteomes" id="UP000002494">
    <property type="component" value="Chromosome 12"/>
</dbReference>
<dbReference type="Bgee" id="ENSRNOG00000001183">
    <property type="expression patterns" value="Expressed in adult mammalian kidney and 10 other cell types or tissues"/>
</dbReference>
<dbReference type="GO" id="GO:0000785">
    <property type="term" value="C:chromatin"/>
    <property type="evidence" value="ECO:0000314"/>
    <property type="project" value="RGD"/>
</dbReference>
<dbReference type="GO" id="GO:0005737">
    <property type="term" value="C:cytoplasm"/>
    <property type="evidence" value="ECO:0000266"/>
    <property type="project" value="RGD"/>
</dbReference>
<dbReference type="GO" id="GO:0005634">
    <property type="term" value="C:nucleus"/>
    <property type="evidence" value="ECO:0000314"/>
    <property type="project" value="MGI"/>
</dbReference>
<dbReference type="GO" id="GO:0001750">
    <property type="term" value="C:photoreceptor outer segment"/>
    <property type="evidence" value="ECO:0000266"/>
    <property type="project" value="RGD"/>
</dbReference>
<dbReference type="GO" id="GO:0045120">
    <property type="term" value="C:pronucleus"/>
    <property type="evidence" value="ECO:0000266"/>
    <property type="project" value="RGD"/>
</dbReference>
<dbReference type="GO" id="GO:0032991">
    <property type="term" value="C:protein-containing complex"/>
    <property type="evidence" value="ECO:0000314"/>
    <property type="project" value="RGD"/>
</dbReference>
<dbReference type="GO" id="GO:0005667">
    <property type="term" value="C:transcription regulator complex"/>
    <property type="evidence" value="ECO:0000266"/>
    <property type="project" value="RGD"/>
</dbReference>
<dbReference type="GO" id="GO:0003682">
    <property type="term" value="F:chromatin binding"/>
    <property type="evidence" value="ECO:0000266"/>
    <property type="project" value="RGD"/>
</dbReference>
<dbReference type="GO" id="GO:0003677">
    <property type="term" value="F:DNA binding"/>
    <property type="evidence" value="ECO:0000314"/>
    <property type="project" value="MGI"/>
</dbReference>
<dbReference type="GO" id="GO:0001228">
    <property type="term" value="F:DNA-binding transcription activator activity, RNA polymerase II-specific"/>
    <property type="evidence" value="ECO:0000314"/>
    <property type="project" value="BHF-UCL"/>
</dbReference>
<dbReference type="GO" id="GO:0003700">
    <property type="term" value="F:DNA-binding transcription factor activity"/>
    <property type="evidence" value="ECO:0000314"/>
    <property type="project" value="MGI"/>
</dbReference>
<dbReference type="GO" id="GO:0000981">
    <property type="term" value="F:DNA-binding transcription factor activity, RNA polymerase II-specific"/>
    <property type="evidence" value="ECO:0000318"/>
    <property type="project" value="GO_Central"/>
</dbReference>
<dbReference type="GO" id="GO:0003690">
    <property type="term" value="F:double-stranded DNA binding"/>
    <property type="evidence" value="ECO:0000314"/>
    <property type="project" value="RGD"/>
</dbReference>
<dbReference type="GO" id="GO:0042802">
    <property type="term" value="F:identical protein binding"/>
    <property type="evidence" value="ECO:0000266"/>
    <property type="project" value="RGD"/>
</dbReference>
<dbReference type="GO" id="GO:0046983">
    <property type="term" value="F:protein dimerization activity"/>
    <property type="evidence" value="ECO:0000266"/>
    <property type="project" value="RGD"/>
</dbReference>
<dbReference type="GO" id="GO:0000978">
    <property type="term" value="F:RNA polymerase II cis-regulatory region sequence-specific DNA binding"/>
    <property type="evidence" value="ECO:0000266"/>
    <property type="project" value="RGD"/>
</dbReference>
<dbReference type="GO" id="GO:0043565">
    <property type="term" value="F:sequence-specific DNA binding"/>
    <property type="evidence" value="ECO:0000314"/>
    <property type="project" value="RGD"/>
</dbReference>
<dbReference type="GO" id="GO:0000976">
    <property type="term" value="F:transcription cis-regulatory region binding"/>
    <property type="evidence" value="ECO:0000250"/>
    <property type="project" value="UniProtKB"/>
</dbReference>
<dbReference type="GO" id="GO:0001223">
    <property type="term" value="F:transcription coactivator binding"/>
    <property type="evidence" value="ECO:0000353"/>
    <property type="project" value="RGD"/>
</dbReference>
<dbReference type="GO" id="GO:0001221">
    <property type="term" value="F:transcription coregulator binding"/>
    <property type="evidence" value="ECO:0000353"/>
    <property type="project" value="RGD"/>
</dbReference>
<dbReference type="GO" id="GO:0030262">
    <property type="term" value="P:apoptotic nuclear changes"/>
    <property type="evidence" value="ECO:0000315"/>
    <property type="project" value="RGD"/>
</dbReference>
<dbReference type="GO" id="GO:0015721">
    <property type="term" value="P:bile acid and bile salt transport"/>
    <property type="evidence" value="ECO:0000266"/>
    <property type="project" value="RGD"/>
</dbReference>
<dbReference type="GO" id="GO:0006699">
    <property type="term" value="P:bile acid biosynthetic process"/>
    <property type="evidence" value="ECO:0000266"/>
    <property type="project" value="RGD"/>
</dbReference>
<dbReference type="GO" id="GO:0001824">
    <property type="term" value="P:blastocyst development"/>
    <property type="evidence" value="ECO:0000266"/>
    <property type="project" value="RGD"/>
</dbReference>
<dbReference type="GO" id="GO:0045453">
    <property type="term" value="P:bone resorption"/>
    <property type="evidence" value="ECO:0000266"/>
    <property type="project" value="RGD"/>
</dbReference>
<dbReference type="GO" id="GO:0071333">
    <property type="term" value="P:cellular response to glucose stimulus"/>
    <property type="evidence" value="ECO:0000315"/>
    <property type="project" value="RGD"/>
</dbReference>
<dbReference type="GO" id="GO:0071233">
    <property type="term" value="P:cellular response to L-leucine"/>
    <property type="evidence" value="ECO:0000315"/>
    <property type="project" value="RGD"/>
</dbReference>
<dbReference type="GO" id="GO:0072752">
    <property type="term" value="P:cellular response to rapamycin"/>
    <property type="evidence" value="ECO:0000315"/>
    <property type="project" value="RGD"/>
</dbReference>
<dbReference type="GO" id="GO:0008203">
    <property type="term" value="P:cholesterol metabolic process"/>
    <property type="evidence" value="ECO:0000266"/>
    <property type="project" value="RGD"/>
</dbReference>
<dbReference type="GO" id="GO:0006338">
    <property type="term" value="P:chromatin remodeling"/>
    <property type="evidence" value="ECO:0000266"/>
    <property type="project" value="RGD"/>
</dbReference>
<dbReference type="GO" id="GO:0046323">
    <property type="term" value="P:D-glucose import"/>
    <property type="evidence" value="ECO:0000266"/>
    <property type="project" value="RGD"/>
</dbReference>
<dbReference type="GO" id="GO:0030326">
    <property type="term" value="P:embryonic limb morphogenesis"/>
    <property type="evidence" value="ECO:0000266"/>
    <property type="project" value="RGD"/>
</dbReference>
<dbReference type="GO" id="GO:0006633">
    <property type="term" value="P:fatty acid biosynthetic process"/>
    <property type="evidence" value="ECO:0000266"/>
    <property type="project" value="RGD"/>
</dbReference>
<dbReference type="GO" id="GO:0015908">
    <property type="term" value="P:fatty acid transport"/>
    <property type="evidence" value="ECO:0000266"/>
    <property type="project" value="RGD"/>
</dbReference>
<dbReference type="GO" id="GO:0042593">
    <property type="term" value="P:glucose homeostasis"/>
    <property type="evidence" value="ECO:0000266"/>
    <property type="project" value="RGD"/>
</dbReference>
<dbReference type="GO" id="GO:0006783">
    <property type="term" value="P:heme biosynthetic process"/>
    <property type="evidence" value="ECO:0000266"/>
    <property type="project" value="RGD"/>
</dbReference>
<dbReference type="GO" id="GO:0030073">
    <property type="term" value="P:insulin secretion"/>
    <property type="evidence" value="ECO:0000266"/>
    <property type="project" value="RGD"/>
</dbReference>
<dbReference type="GO" id="GO:0001889">
    <property type="term" value="P:liver development"/>
    <property type="evidence" value="ECO:0000266"/>
    <property type="project" value="RGD"/>
</dbReference>
<dbReference type="GO" id="GO:0043066">
    <property type="term" value="P:negative regulation of apoptotic process"/>
    <property type="evidence" value="ECO:0000315"/>
    <property type="project" value="RGD"/>
</dbReference>
<dbReference type="GO" id="GO:1903799">
    <property type="term" value="P:negative regulation of miRNA processing"/>
    <property type="evidence" value="ECO:0000315"/>
    <property type="project" value="RGD"/>
</dbReference>
<dbReference type="GO" id="GO:0000122">
    <property type="term" value="P:negative regulation of transcription by RNA polymerase II"/>
    <property type="evidence" value="ECO:0000314"/>
    <property type="project" value="RGD"/>
</dbReference>
<dbReference type="GO" id="GO:0031016">
    <property type="term" value="P:pancreas development"/>
    <property type="evidence" value="ECO:0007669"/>
    <property type="project" value="InterPro"/>
</dbReference>
<dbReference type="GO" id="GO:0048341">
    <property type="term" value="P:paraxial mesoderm formation"/>
    <property type="evidence" value="ECO:0000266"/>
    <property type="project" value="RGD"/>
</dbReference>
<dbReference type="GO" id="GO:0001890">
    <property type="term" value="P:placenta development"/>
    <property type="evidence" value="ECO:0000266"/>
    <property type="project" value="RGD"/>
</dbReference>
<dbReference type="GO" id="GO:2001171">
    <property type="term" value="P:positive regulation of ATP biosynthetic process"/>
    <property type="evidence" value="ECO:0000315"/>
    <property type="project" value="RGD"/>
</dbReference>
<dbReference type="GO" id="GO:0045893">
    <property type="term" value="P:positive regulation of DNA-templated transcription"/>
    <property type="evidence" value="ECO:0000250"/>
    <property type="project" value="UniProtKB"/>
</dbReference>
<dbReference type="GO" id="GO:0010628">
    <property type="term" value="P:positive regulation of gene expression"/>
    <property type="evidence" value="ECO:0000315"/>
    <property type="project" value="RGD"/>
</dbReference>
<dbReference type="GO" id="GO:0032024">
    <property type="term" value="P:positive regulation of insulin secretion"/>
    <property type="evidence" value="ECO:0000270"/>
    <property type="project" value="RGD"/>
</dbReference>
<dbReference type="GO" id="GO:0010918">
    <property type="term" value="P:positive regulation of mitochondrial membrane potential"/>
    <property type="evidence" value="ECO:0000315"/>
    <property type="project" value="RGD"/>
</dbReference>
<dbReference type="GO" id="GO:0051897">
    <property type="term" value="P:positive regulation of phosphatidylinositol 3-kinase/protein kinase B signal transduction"/>
    <property type="evidence" value="ECO:0000315"/>
    <property type="project" value="RGD"/>
</dbReference>
<dbReference type="GO" id="GO:0045944">
    <property type="term" value="P:positive regulation of transcription by RNA polymerase II"/>
    <property type="evidence" value="ECO:0000314"/>
    <property type="project" value="BHF-UCL"/>
</dbReference>
<dbReference type="GO" id="GO:0060261">
    <property type="term" value="P:positive regulation of transcription initiation by RNA polymerase II"/>
    <property type="evidence" value="ECO:0000266"/>
    <property type="project" value="RGD"/>
</dbReference>
<dbReference type="GO" id="GO:0008104">
    <property type="term" value="P:protein localization"/>
    <property type="evidence" value="ECO:0000266"/>
    <property type="project" value="RGD"/>
</dbReference>
<dbReference type="GO" id="GO:0006355">
    <property type="term" value="P:regulation of DNA-templated transcription"/>
    <property type="evidence" value="ECO:0000266"/>
    <property type="project" value="RGD"/>
</dbReference>
<dbReference type="GO" id="GO:0046883">
    <property type="term" value="P:regulation of hormone secretion"/>
    <property type="evidence" value="ECO:0000266"/>
    <property type="project" value="RGD"/>
</dbReference>
<dbReference type="GO" id="GO:1902031">
    <property type="term" value="P:regulation of NADP metabolic process"/>
    <property type="evidence" value="ECO:0000315"/>
    <property type="project" value="RGD"/>
</dbReference>
<dbReference type="GO" id="GO:0006357">
    <property type="term" value="P:regulation of transcription by RNA polymerase II"/>
    <property type="evidence" value="ECO:0000266"/>
    <property type="project" value="RGD"/>
</dbReference>
<dbReference type="GO" id="GO:0030111">
    <property type="term" value="P:regulation of Wnt signaling pathway"/>
    <property type="evidence" value="ECO:0000266"/>
    <property type="project" value="RGD"/>
</dbReference>
<dbReference type="GO" id="GO:0035623">
    <property type="term" value="P:renal D-glucose absorption"/>
    <property type="evidence" value="ECO:0000266"/>
    <property type="project" value="RGD"/>
</dbReference>
<dbReference type="GO" id="GO:0048608">
    <property type="term" value="P:reproductive structure development"/>
    <property type="evidence" value="ECO:0000266"/>
    <property type="project" value="RGD"/>
</dbReference>
<dbReference type="GO" id="GO:0009749">
    <property type="term" value="P:response to glucose"/>
    <property type="evidence" value="ECO:0000266"/>
    <property type="project" value="RGD"/>
</dbReference>
<dbReference type="GO" id="GO:0006979">
    <property type="term" value="P:response to oxidative stress"/>
    <property type="evidence" value="ECO:0000266"/>
    <property type="project" value="RGD"/>
</dbReference>
<dbReference type="GO" id="GO:0043691">
    <property type="term" value="P:reverse cholesterol transport"/>
    <property type="evidence" value="ECO:0000266"/>
    <property type="project" value="RGD"/>
</dbReference>
<dbReference type="GO" id="GO:0006366">
    <property type="term" value="P:transcription by RNA polymerase II"/>
    <property type="evidence" value="ECO:0000314"/>
    <property type="project" value="RGD"/>
</dbReference>
<dbReference type="CDD" id="cd00086">
    <property type="entry name" value="homeodomain"/>
    <property type="match status" value="1"/>
</dbReference>
<dbReference type="FunFam" id="1.10.10.60:FF:000043">
    <property type="entry name" value="Hepatocyte nuclear factor 1-beta"/>
    <property type="match status" value="1"/>
</dbReference>
<dbReference type="FunFam" id="1.10.260.40:FF:000009">
    <property type="entry name" value="Hepatocyte nuclear factor 1-beta"/>
    <property type="match status" value="1"/>
</dbReference>
<dbReference type="Gene3D" id="1.10.10.60">
    <property type="entry name" value="Homeodomain-like"/>
    <property type="match status" value="1"/>
</dbReference>
<dbReference type="Gene3D" id="1.10.260.40">
    <property type="entry name" value="lambda repressor-like DNA-binding domains"/>
    <property type="match status" value="1"/>
</dbReference>
<dbReference type="InterPro" id="IPR001356">
    <property type="entry name" value="HD"/>
</dbReference>
<dbReference type="InterPro" id="IPR039066">
    <property type="entry name" value="HNF-1"/>
</dbReference>
<dbReference type="InterPro" id="IPR006899">
    <property type="entry name" value="HNF-1_N"/>
</dbReference>
<dbReference type="InterPro" id="IPR044869">
    <property type="entry name" value="HNF-1_POU"/>
</dbReference>
<dbReference type="InterPro" id="IPR023219">
    <property type="entry name" value="HNF1_dimer_N_dom_sf"/>
</dbReference>
<dbReference type="InterPro" id="IPR006898">
    <property type="entry name" value="HNF1a_C"/>
</dbReference>
<dbReference type="InterPro" id="IPR006897">
    <property type="entry name" value="HNF1b_C"/>
</dbReference>
<dbReference type="InterPro" id="IPR044866">
    <property type="entry name" value="HNF_P1"/>
</dbReference>
<dbReference type="InterPro" id="IPR009057">
    <property type="entry name" value="Homeodomain-like_sf"/>
</dbReference>
<dbReference type="InterPro" id="IPR010982">
    <property type="entry name" value="Lambda_DNA-bd_dom_sf"/>
</dbReference>
<dbReference type="PANTHER" id="PTHR11568">
    <property type="entry name" value="HEPATOCYTE NUCLEAR FACTOR 1"/>
    <property type="match status" value="1"/>
</dbReference>
<dbReference type="PANTHER" id="PTHR11568:SF4">
    <property type="entry name" value="HEPATOCYTE NUCLEAR FACTOR 1-ALPHA"/>
    <property type="match status" value="1"/>
</dbReference>
<dbReference type="Pfam" id="PF04814">
    <property type="entry name" value="HNF-1_N"/>
    <property type="match status" value="1"/>
</dbReference>
<dbReference type="Pfam" id="PF04813">
    <property type="entry name" value="HNF-1A_C"/>
    <property type="match status" value="1"/>
</dbReference>
<dbReference type="Pfam" id="PF04812">
    <property type="entry name" value="HNF-1B_C"/>
    <property type="match status" value="1"/>
</dbReference>
<dbReference type="SMART" id="SM00389">
    <property type="entry name" value="HOX"/>
    <property type="match status" value="1"/>
</dbReference>
<dbReference type="SUPFAM" id="SSF100957">
    <property type="entry name" value="Dimerization cofactor of HNF-1 alpha"/>
    <property type="match status" value="1"/>
</dbReference>
<dbReference type="SUPFAM" id="SSF46689">
    <property type="entry name" value="Homeodomain-like"/>
    <property type="match status" value="1"/>
</dbReference>
<dbReference type="SUPFAM" id="SSF47413">
    <property type="entry name" value="lambda repressor-like DNA-binding domains"/>
    <property type="match status" value="1"/>
</dbReference>
<dbReference type="PROSITE" id="PS51937">
    <property type="entry name" value="HNF_P1"/>
    <property type="match status" value="1"/>
</dbReference>
<dbReference type="PROSITE" id="PS00027">
    <property type="entry name" value="HOMEOBOX_1"/>
    <property type="match status" value="1"/>
</dbReference>
<dbReference type="PROSITE" id="PS50071">
    <property type="entry name" value="HOMEOBOX_2"/>
    <property type="match status" value="1"/>
</dbReference>
<dbReference type="PROSITE" id="PS51936">
    <property type="entry name" value="POU_4"/>
    <property type="match status" value="1"/>
</dbReference>
<comment type="function">
    <text evidence="3">Transcriptional activator that regulates the tissue specific expression of multiple genes, especially in pancreatic islet cells and in liver (By similarity). Binds to the inverted palindrome 5'-GTTAATNATTAAC-3' (By similarity). Activates the transcription of CYP1A2, CYP2E1 and CYP3A11 (By similarity).</text>
</comment>
<comment type="subunit">
    <text evidence="2 3 9">Binds DNA as a dimer (PubMed:8491173). Heterotetramer with PCBD1; formed by a dimer of dimers (By similarity). Interacts with PCBD1 (By similarity). Interacts with BHLHE41 (By similarity). Interacts with NR5A2 (By similarity). Interacts with SPOP; this interaction promotes ubiquitination and degradation of HNF1A (By similarity).</text>
</comment>
<comment type="subcellular location">
    <subcellularLocation>
        <location>Nucleus</location>
    </subcellularLocation>
</comment>
<comment type="tissue specificity">
    <text>Liver.</text>
</comment>
<comment type="PTM">
    <text evidence="2">Ubiquitinated in s SPOP-dependent manner; leading to prteasomal degradation.</text>
</comment>
<comment type="similarity">
    <text evidence="10">Belongs to the HNF1 homeobox family.</text>
</comment>
<comment type="sequence caution" evidence="10">
    <conflict type="erroneous initiation">
        <sequence resource="EMBL-CDS" id="CAA37387"/>
    </conflict>
</comment>
<evidence type="ECO:0000250" key="1"/>
<evidence type="ECO:0000250" key="2">
    <source>
        <dbReference type="UniProtKB" id="P20823"/>
    </source>
</evidence>
<evidence type="ECO:0000250" key="3">
    <source>
        <dbReference type="UniProtKB" id="P22361"/>
    </source>
</evidence>
<evidence type="ECO:0000255" key="4"/>
<evidence type="ECO:0000255" key="5">
    <source>
        <dbReference type="PROSITE-ProRule" id="PRU00108"/>
    </source>
</evidence>
<evidence type="ECO:0000255" key="6">
    <source>
        <dbReference type="PROSITE-ProRule" id="PRU01285"/>
    </source>
</evidence>
<evidence type="ECO:0000255" key="7">
    <source>
        <dbReference type="PROSITE-ProRule" id="PRU01286"/>
    </source>
</evidence>
<evidence type="ECO:0000256" key="8">
    <source>
        <dbReference type="SAM" id="MobiDB-lite"/>
    </source>
</evidence>
<evidence type="ECO:0000269" key="9">
    <source>
    </source>
</evidence>
<evidence type="ECO:0000305" key="10"/>
<evidence type="ECO:0007744" key="11">
    <source>
    </source>
</evidence>
<evidence type="ECO:0007829" key="12">
    <source>
        <dbReference type="PDB" id="1LFB"/>
    </source>
</evidence>
<reference key="1">
    <citation type="journal article" date="1989" name="Cell">
        <title>The liver-specific transcription factor LF-B1 contains a highly diverged homeobox DNA binding domain.</title>
        <authorList>
            <person name="Frain M."/>
            <person name="Swart G."/>
            <person name="Monaci P."/>
            <person name="Nicosia A."/>
            <person name="Staempfli S."/>
            <person name="Frank R."/>
            <person name="Cortese R."/>
        </authorList>
    </citation>
    <scope>NUCLEOTIDE SEQUENCE [MRNA]</scope>
    <source>
        <tissue>Liver</tissue>
    </source>
</reference>
<reference key="2">
    <citation type="journal article" date="1990" name="Nucleic Acids Res.">
        <title>A distal dimerization domain is essential for DNA-binding by the atypical HNF1 homeodomain.</title>
        <authorList>
            <person name="Chouard T."/>
            <person name="Blumenfeld M."/>
            <person name="Bach I."/>
            <person name="Vandekerckhove J."/>
            <person name="Cereghini S."/>
            <person name="Yaniv M."/>
        </authorList>
    </citation>
    <scope>NUCLEOTIDE SEQUENCE [MRNA]</scope>
</reference>
<reference key="3">
    <citation type="journal article" date="1994" name="Nucleic Acids Res.">
        <title>LFB1/HNF1 acts as a repressor of its own transcription.</title>
        <authorList>
            <person name="Piaggio G."/>
            <person name="Tomei L."/>
            <person name="Toniatti C."/>
            <person name="De Francesco R."/>
            <person name="Gerstner J."/>
            <person name="Cortese R."/>
        </authorList>
    </citation>
    <scope>NUCLEOTIDE SEQUENCE [GENOMIC DNA] OF 1-12</scope>
    <source>
        <strain>Sprague-Dawley</strain>
    </source>
</reference>
<reference key="4">
    <citation type="journal article" date="1990" name="Genes Dev.">
        <title>HNF-1 shares three sequence motifs with the POU domain proteins and is identical to LF-B1 and APF.</title>
        <authorList>
            <person name="Baumhueter S."/>
            <person name="Mendel D.B."/>
            <person name="Conley P.B."/>
            <person name="Kuo C.J."/>
            <person name="Turk C."/>
            <person name="Graves M.K."/>
            <person name="Edwards C.A."/>
            <person name="Courtois G."/>
            <person name="Crabtree G.R."/>
        </authorList>
    </citation>
    <scope>NUCLEOTIDE SEQUENCE [MRNA] OF 166-628</scope>
</reference>
<reference key="5">
    <citation type="journal article" date="1992" name="Nucleic Acids Res.">
        <title>Structure of the gene encoding hepatocyte nuclear factor 1 (HNF1).</title>
        <authorList>
            <person name="Bach I."/>
            <person name="Pontoglio M."/>
            <person name="Yaniv M."/>
        </authorList>
    </citation>
    <scope>NUCLEOTIDE SEQUENCE OF 199-279</scope>
</reference>
<reference key="6">
    <citation type="journal article" date="1990" name="Cell">
        <title>The homeodomain of the transcription factor LF-B1 has a 21 amino acid loop between helix 2 and helix 3.</title>
        <authorList>
            <person name="Finney M."/>
        </authorList>
    </citation>
    <scope>POSITION OF HOMEOBOX</scope>
</reference>
<reference key="7">
    <citation type="journal article" date="2012" name="Nat. Commun.">
        <title>Quantitative maps of protein phosphorylation sites across 14 different rat organs and tissues.</title>
        <authorList>
            <person name="Lundby A."/>
            <person name="Secher A."/>
            <person name="Lage K."/>
            <person name="Nordsborg N.B."/>
            <person name="Dmytriyev A."/>
            <person name="Lundby C."/>
            <person name="Olsen J.V."/>
        </authorList>
    </citation>
    <scope>PHOSPHORYLATION [LARGE SCALE ANALYSIS] AT THR-74 AND SER-247</scope>
    <scope>IDENTIFICATION BY MASS SPECTROMETRY [LARGE SCALE ANALYSIS]</scope>
</reference>
<reference key="8">
    <citation type="journal article" date="1991" name="Biochemistry">
        <title>1H resonance assignment and secondary structure determination of the dimerization domain of transcription factor LFB1.</title>
        <authorList>
            <person name="Pastore A."/>
            <person name="de Francesco R."/>
            <person name="Barbato G."/>
            <person name="Castiglione Morelli M.A."/>
            <person name="Motta A."/>
            <person name="Cortese R."/>
        </authorList>
    </citation>
    <scope>STRUCTURE BY NMR OF 1-32</scope>
</reference>
<reference key="9">
    <citation type="journal article" date="1993" name="EMBO J.">
        <title>The three-dimensional NMR-solution structure of the polypeptide fragment 195-286 of the LFB1/HNF1 transcription factor from rat liver comprises a nonclassical homeodomain.</title>
        <authorList>
            <person name="Leiting B."/>
            <person name="de Francesco R."/>
            <person name="Tomei L."/>
            <person name="Cortese R."/>
            <person name="Otting G."/>
            <person name="Wuethrich K."/>
        </authorList>
    </citation>
    <scope>STRUCTURE BY NMR OF 195-286</scope>
</reference>
<reference key="10">
    <citation type="journal article" date="1997" name="J. Mol. Biol.">
        <title>The NMR solution structure of the non-classical homeodomain from the rat liver LFB1/HNF1 transcription factor.</title>
        <authorList>
            <person name="Schott O."/>
            <person name="Billeter M."/>
            <person name="Leiting B."/>
            <person name="Wider G."/>
            <person name="Wuethrich K."/>
        </authorList>
    </citation>
    <scope>STRUCTURE BY NMR OF 195-286</scope>
</reference>
<reference key="11">
    <citation type="journal article" date="1993" name="EMBO J.">
        <title>The X-ray structure of an atypical homeodomain present in the rat liver transcription factor LFB1/HNF1 and implications for DNA binding.</title>
        <authorList>
            <person name="Ceska T.A."/>
            <person name="Lamers M."/>
            <person name="Monaci P."/>
            <person name="Nicosia A."/>
            <person name="Cortese R."/>
            <person name="Suck D."/>
        </authorList>
    </citation>
    <scope>X-RAY CRYSTALLOGRAPHY (2.8 ANGSTROMS) OF 195-286</scope>
    <scope>SUBUNIT</scope>
</reference>
<sequence>MVSKLSQLQTELLAALLESGLSKEALIQALGEPGPYLMVGDGPLDKGESCGGTRGDLTELPNGLGETRGSEDDTDDDGEDFAPPILKELENLSPEEAAHQKAVVESLLQEDPWRVAKMVKSYLQQHNIPQREVVDTTGLNQSHLSQHLNKGTPMKTQKRAALYTWYVRKQREVAQQFTHAGQGGLIEEPTGDELPTKKGRRNRFKWGPASQQILFQAYERQKNPSKEERETLVEECNRAECIQRGVSPSQAQGLGSNLVTEVRVYNWFANRRKEEAFRHKLAMDTYNGPPPGPGPGPALPAHSSPGLPTTTLSPSKVHGVRYGQSATSEAAEVPSSSGGPLVTVSAALHQVSPTGLEPSSLLSTEAKLVSATGGPLPPVSTLTALHSLEQTSPGLNQQPQNLIMASLPGVMTIGPGEPASLGPTFTNTGASTLVIGLASTQAQSVPVINSMGSSLTTLQPVQFSQPLHPSYQQPLMPPVQSHVAQSPFMATMAQLQSPHALYSHKPEVAQYTHTSLLPQTMLITDTNLSTLASLTPTKQVFTSDTEASSEPGLHEPSSPATTIHIPSQDPSNIQHLQPAHRLSTSPTVSSSSLVLYQSSDSNGHSHLLPSNHGVIETFISTQMASSSQ</sequence>
<accession>P15257</accession>
<protein>
    <recommendedName>
        <fullName>Hepatocyte nuclear factor 1-alpha</fullName>
        <shortName>HNF-1-alpha</shortName>
        <shortName>HNF-1A</shortName>
    </recommendedName>
    <alternativeName>
        <fullName>Liver-specific transcription factor LF-B1</fullName>
        <shortName>LFB1</shortName>
    </alternativeName>
    <alternativeName>
        <fullName>Transcription factor 1</fullName>
        <shortName>TCF-1</shortName>
    </alternativeName>
</protein>
<feature type="chain" id="PRO_0000049117" description="Hepatocyte nuclear factor 1-alpha">
    <location>
        <begin position="1"/>
        <end position="628"/>
    </location>
</feature>
<feature type="domain" description="HNF-p1" evidence="7">
    <location>
        <begin position="1"/>
        <end position="32"/>
    </location>
</feature>
<feature type="domain" description="POU-specific atypical" evidence="6">
    <location>
        <begin position="87"/>
        <end position="182"/>
    </location>
</feature>
<feature type="DNA-binding region" description="Homeobox; HNF1-type" evidence="5">
    <location>
        <begin position="199"/>
        <end position="279"/>
    </location>
</feature>
<feature type="region of interest" description="Dimerization">
    <location>
        <begin position="1"/>
        <end position="31"/>
    </location>
</feature>
<feature type="region of interest" description="Disordered" evidence="8">
    <location>
        <begin position="47"/>
        <end position="79"/>
    </location>
</feature>
<feature type="region of interest" description="Interaction with DNA" evidence="1">
    <location>
        <begin position="130"/>
        <end position="132"/>
    </location>
</feature>
<feature type="region of interest" description="Interaction with DNA" evidence="1">
    <location>
        <begin position="143"/>
        <end position="149"/>
    </location>
</feature>
<feature type="region of interest" description="Interaction with DNA" evidence="1">
    <location>
        <begin position="155"/>
        <end position="158"/>
    </location>
</feature>
<feature type="region of interest" description="Disordered" evidence="8">
    <location>
        <begin position="183"/>
        <end position="205"/>
    </location>
</feature>
<feature type="region of interest" description="Interaction with DNA" evidence="1">
    <location>
        <begin position="203"/>
        <end position="206"/>
    </location>
</feature>
<feature type="region of interest" description="Interaction with DNA" evidence="1">
    <location>
        <begin position="263"/>
        <end position="265"/>
    </location>
</feature>
<feature type="region of interest" description="Interaction with DNA" evidence="1">
    <location>
        <begin position="270"/>
        <end position="273"/>
    </location>
</feature>
<feature type="region of interest" description="Disordered" evidence="8">
    <location>
        <begin position="284"/>
        <end position="338"/>
    </location>
</feature>
<feature type="region of interest" description="Disordered" evidence="8">
    <location>
        <begin position="541"/>
        <end position="585"/>
    </location>
</feature>
<feature type="short sequence motif" description="Nuclear localization signal" evidence="4">
    <location>
        <begin position="197"/>
        <end position="205"/>
    </location>
</feature>
<feature type="compositionally biased region" description="Pro residues" evidence="8">
    <location>
        <begin position="288"/>
        <end position="298"/>
    </location>
</feature>
<feature type="compositionally biased region" description="Polar residues" evidence="8">
    <location>
        <begin position="324"/>
        <end position="338"/>
    </location>
</feature>
<feature type="compositionally biased region" description="Polar residues" evidence="8">
    <location>
        <begin position="558"/>
        <end position="575"/>
    </location>
</feature>
<feature type="modified residue" description="Phosphoserine" evidence="3">
    <location>
        <position position="70"/>
    </location>
</feature>
<feature type="modified residue" description="Phosphothreonine" evidence="11">
    <location>
        <position position="74"/>
    </location>
</feature>
<feature type="modified residue" description="Phosphoserine" evidence="2">
    <location>
        <position position="93"/>
    </location>
</feature>
<feature type="modified residue" description="Phosphoserine" evidence="11">
    <location>
        <position position="247"/>
    </location>
</feature>
<feature type="modified residue" description="Phosphoserine" evidence="3">
    <location>
        <position position="313"/>
    </location>
</feature>
<feature type="cross-link" description="Glycyl lysine isopeptide (Lys-Gly) (interchain with G-Cter in ubiquitin)" evidence="2">
    <location>
        <position position="117"/>
    </location>
</feature>
<feature type="helix" evidence="12">
    <location>
        <begin position="208"/>
        <end position="218"/>
    </location>
</feature>
<feature type="helix" evidence="12">
    <location>
        <begin position="226"/>
        <end position="241"/>
    </location>
</feature>
<feature type="turn" evidence="12">
    <location>
        <begin position="242"/>
        <end position="245"/>
    </location>
</feature>
<feature type="turn" evidence="12">
    <location>
        <begin position="251"/>
        <end position="254"/>
    </location>
</feature>
<feature type="helix" evidence="12">
    <location>
        <begin position="255"/>
        <end position="257"/>
    </location>
</feature>
<feature type="helix" evidence="12">
    <location>
        <begin position="261"/>
        <end position="273"/>
    </location>
</feature>